<reference key="1">
    <citation type="journal article" date="2009" name="PLoS Genet.">
        <title>Organised genome dynamics in the Escherichia coli species results in highly diverse adaptive paths.</title>
        <authorList>
            <person name="Touchon M."/>
            <person name="Hoede C."/>
            <person name="Tenaillon O."/>
            <person name="Barbe V."/>
            <person name="Baeriswyl S."/>
            <person name="Bidet P."/>
            <person name="Bingen E."/>
            <person name="Bonacorsi S."/>
            <person name="Bouchier C."/>
            <person name="Bouvet O."/>
            <person name="Calteau A."/>
            <person name="Chiapello H."/>
            <person name="Clermont O."/>
            <person name="Cruveiller S."/>
            <person name="Danchin A."/>
            <person name="Diard M."/>
            <person name="Dossat C."/>
            <person name="Karoui M.E."/>
            <person name="Frapy E."/>
            <person name="Garry L."/>
            <person name="Ghigo J.M."/>
            <person name="Gilles A.M."/>
            <person name="Johnson J."/>
            <person name="Le Bouguenec C."/>
            <person name="Lescat M."/>
            <person name="Mangenot S."/>
            <person name="Martinez-Jehanne V."/>
            <person name="Matic I."/>
            <person name="Nassif X."/>
            <person name="Oztas S."/>
            <person name="Petit M.A."/>
            <person name="Pichon C."/>
            <person name="Rouy Z."/>
            <person name="Ruf C.S."/>
            <person name="Schneider D."/>
            <person name="Tourret J."/>
            <person name="Vacherie B."/>
            <person name="Vallenet D."/>
            <person name="Medigue C."/>
            <person name="Rocha E.P.C."/>
            <person name="Denamur E."/>
        </authorList>
    </citation>
    <scope>NUCLEOTIDE SEQUENCE [LARGE SCALE GENOMIC DNA]</scope>
    <source>
        <strain>UMN026 / ExPEC</strain>
    </source>
</reference>
<protein>
    <recommendedName>
        <fullName evidence="1">Phenylalanine--tRNA ligase alpha subunit</fullName>
        <ecNumber evidence="1">6.1.1.20</ecNumber>
    </recommendedName>
    <alternativeName>
        <fullName evidence="1">Phenylalanyl-tRNA synthetase alpha subunit</fullName>
        <shortName evidence="1">PheRS</shortName>
    </alternativeName>
</protein>
<feature type="chain" id="PRO_1000119396" description="Phenylalanine--tRNA ligase alpha subunit">
    <location>
        <begin position="1"/>
        <end position="327"/>
    </location>
</feature>
<feature type="binding site" evidence="1">
    <location>
        <position position="252"/>
    </location>
    <ligand>
        <name>Mg(2+)</name>
        <dbReference type="ChEBI" id="CHEBI:18420"/>
        <note>shared with beta subunit</note>
    </ligand>
</feature>
<dbReference type="EC" id="6.1.1.20" evidence="1"/>
<dbReference type="EMBL" id="CU928163">
    <property type="protein sequence ID" value="CAR13201.1"/>
    <property type="molecule type" value="Genomic_DNA"/>
</dbReference>
<dbReference type="RefSeq" id="WP_000018588.1">
    <property type="nucleotide sequence ID" value="NC_011751.1"/>
</dbReference>
<dbReference type="RefSeq" id="YP_002412733.1">
    <property type="nucleotide sequence ID" value="NC_011751.1"/>
</dbReference>
<dbReference type="SMR" id="B7N552"/>
<dbReference type="STRING" id="585056.ECUMN_2005"/>
<dbReference type="GeneID" id="86946239"/>
<dbReference type="KEGG" id="eum:ECUMN_2005"/>
<dbReference type="PATRIC" id="fig|585056.7.peg.2190"/>
<dbReference type="HOGENOM" id="CLU_025086_0_1_6"/>
<dbReference type="Proteomes" id="UP000007097">
    <property type="component" value="Chromosome"/>
</dbReference>
<dbReference type="GO" id="GO:0005737">
    <property type="term" value="C:cytoplasm"/>
    <property type="evidence" value="ECO:0007669"/>
    <property type="project" value="UniProtKB-SubCell"/>
</dbReference>
<dbReference type="GO" id="GO:0005524">
    <property type="term" value="F:ATP binding"/>
    <property type="evidence" value="ECO:0007669"/>
    <property type="project" value="UniProtKB-UniRule"/>
</dbReference>
<dbReference type="GO" id="GO:0000287">
    <property type="term" value="F:magnesium ion binding"/>
    <property type="evidence" value="ECO:0007669"/>
    <property type="project" value="UniProtKB-UniRule"/>
</dbReference>
<dbReference type="GO" id="GO:0004826">
    <property type="term" value="F:phenylalanine-tRNA ligase activity"/>
    <property type="evidence" value="ECO:0007669"/>
    <property type="project" value="UniProtKB-UniRule"/>
</dbReference>
<dbReference type="GO" id="GO:0000049">
    <property type="term" value="F:tRNA binding"/>
    <property type="evidence" value="ECO:0007669"/>
    <property type="project" value="InterPro"/>
</dbReference>
<dbReference type="GO" id="GO:0006432">
    <property type="term" value="P:phenylalanyl-tRNA aminoacylation"/>
    <property type="evidence" value="ECO:0007669"/>
    <property type="project" value="UniProtKB-UniRule"/>
</dbReference>
<dbReference type="CDD" id="cd00496">
    <property type="entry name" value="PheRS_alpha_core"/>
    <property type="match status" value="1"/>
</dbReference>
<dbReference type="FunFam" id="3.30.930.10:FF:000003">
    <property type="entry name" value="Phenylalanine--tRNA ligase alpha subunit"/>
    <property type="match status" value="1"/>
</dbReference>
<dbReference type="Gene3D" id="3.30.930.10">
    <property type="entry name" value="Bira Bifunctional Protein, Domain 2"/>
    <property type="match status" value="1"/>
</dbReference>
<dbReference type="HAMAP" id="MF_00281">
    <property type="entry name" value="Phe_tRNA_synth_alpha1"/>
    <property type="match status" value="1"/>
</dbReference>
<dbReference type="InterPro" id="IPR006195">
    <property type="entry name" value="aa-tRNA-synth_II"/>
</dbReference>
<dbReference type="InterPro" id="IPR045864">
    <property type="entry name" value="aa-tRNA-synth_II/BPL/LPL"/>
</dbReference>
<dbReference type="InterPro" id="IPR004529">
    <property type="entry name" value="Phe-tRNA-synth_IIc_asu"/>
</dbReference>
<dbReference type="InterPro" id="IPR004188">
    <property type="entry name" value="Phe-tRNA_ligase_II_N"/>
</dbReference>
<dbReference type="InterPro" id="IPR022911">
    <property type="entry name" value="Phe_tRNA_ligase_alpha1_bac"/>
</dbReference>
<dbReference type="InterPro" id="IPR002319">
    <property type="entry name" value="Phenylalanyl-tRNA_Synthase"/>
</dbReference>
<dbReference type="InterPro" id="IPR010978">
    <property type="entry name" value="tRNA-bd_arm"/>
</dbReference>
<dbReference type="NCBIfam" id="TIGR00468">
    <property type="entry name" value="pheS"/>
    <property type="match status" value="1"/>
</dbReference>
<dbReference type="PANTHER" id="PTHR11538:SF41">
    <property type="entry name" value="PHENYLALANINE--TRNA LIGASE, MITOCHONDRIAL"/>
    <property type="match status" value="1"/>
</dbReference>
<dbReference type="PANTHER" id="PTHR11538">
    <property type="entry name" value="PHENYLALANYL-TRNA SYNTHETASE"/>
    <property type="match status" value="1"/>
</dbReference>
<dbReference type="Pfam" id="PF02912">
    <property type="entry name" value="Phe_tRNA-synt_N"/>
    <property type="match status" value="1"/>
</dbReference>
<dbReference type="Pfam" id="PF01409">
    <property type="entry name" value="tRNA-synt_2d"/>
    <property type="match status" value="1"/>
</dbReference>
<dbReference type="SUPFAM" id="SSF55681">
    <property type="entry name" value="Class II aaRS and biotin synthetases"/>
    <property type="match status" value="1"/>
</dbReference>
<dbReference type="SUPFAM" id="SSF46589">
    <property type="entry name" value="tRNA-binding arm"/>
    <property type="match status" value="1"/>
</dbReference>
<dbReference type="PROSITE" id="PS50862">
    <property type="entry name" value="AA_TRNA_LIGASE_II"/>
    <property type="match status" value="1"/>
</dbReference>
<accession>B7N552</accession>
<comment type="catalytic activity">
    <reaction evidence="1">
        <text>tRNA(Phe) + L-phenylalanine + ATP = L-phenylalanyl-tRNA(Phe) + AMP + diphosphate + H(+)</text>
        <dbReference type="Rhea" id="RHEA:19413"/>
        <dbReference type="Rhea" id="RHEA-COMP:9668"/>
        <dbReference type="Rhea" id="RHEA-COMP:9699"/>
        <dbReference type="ChEBI" id="CHEBI:15378"/>
        <dbReference type="ChEBI" id="CHEBI:30616"/>
        <dbReference type="ChEBI" id="CHEBI:33019"/>
        <dbReference type="ChEBI" id="CHEBI:58095"/>
        <dbReference type="ChEBI" id="CHEBI:78442"/>
        <dbReference type="ChEBI" id="CHEBI:78531"/>
        <dbReference type="ChEBI" id="CHEBI:456215"/>
        <dbReference type="EC" id="6.1.1.20"/>
    </reaction>
</comment>
<comment type="cofactor">
    <cofactor evidence="1">
        <name>Mg(2+)</name>
        <dbReference type="ChEBI" id="CHEBI:18420"/>
    </cofactor>
    <text evidence="1">Binds 2 magnesium ions per tetramer.</text>
</comment>
<comment type="subunit">
    <text evidence="1">Tetramer of two alpha and two beta subunits.</text>
</comment>
<comment type="subcellular location">
    <subcellularLocation>
        <location evidence="1">Cytoplasm</location>
    </subcellularLocation>
</comment>
<comment type="similarity">
    <text evidence="1">Belongs to the class-II aminoacyl-tRNA synthetase family. Phe-tRNA synthetase alpha subunit type 1 subfamily.</text>
</comment>
<organism>
    <name type="scientific">Escherichia coli O17:K52:H18 (strain UMN026 / ExPEC)</name>
    <dbReference type="NCBI Taxonomy" id="585056"/>
    <lineage>
        <taxon>Bacteria</taxon>
        <taxon>Pseudomonadati</taxon>
        <taxon>Pseudomonadota</taxon>
        <taxon>Gammaproteobacteria</taxon>
        <taxon>Enterobacterales</taxon>
        <taxon>Enterobacteriaceae</taxon>
        <taxon>Escherichia</taxon>
    </lineage>
</organism>
<name>SYFA_ECOLU</name>
<evidence type="ECO:0000255" key="1">
    <source>
        <dbReference type="HAMAP-Rule" id="MF_00281"/>
    </source>
</evidence>
<keyword id="KW-0030">Aminoacyl-tRNA synthetase</keyword>
<keyword id="KW-0067">ATP-binding</keyword>
<keyword id="KW-0963">Cytoplasm</keyword>
<keyword id="KW-0436">Ligase</keyword>
<keyword id="KW-0460">Magnesium</keyword>
<keyword id="KW-0479">Metal-binding</keyword>
<keyword id="KW-0547">Nucleotide-binding</keyword>
<keyword id="KW-0648">Protein biosynthesis</keyword>
<sequence>MSHLAELVASAKAAISQASDVAALDNVRVEYLGKKGHLTLQMTTLRELPPEERPAAGAVINEAKEQVQQALNARKAELESAALNARLAAETIDVSLPGRRIENGGLHPVTRTIDRIESFFGELGFTVATGPEIEDDYHNFDALNIPGHHPARADHDTFWFDATRLLRTQTSGVQIRTMKAQQPPIRIIAPGRVYRNDYDQTHTPMFHQMEGLIVDTNISFTNLKGTLHDFLRNFFEEDLQIRFRPSYFPFTEPSAEVDVMGKNGKWLEVLGCGMVHPNVLRNVGIDPEVYSGFAFGMGMERLTMLRYGVTDLRSFFENDLRFLKQFK</sequence>
<gene>
    <name evidence="1" type="primary">pheS</name>
    <name type="ordered locus">ECUMN_2005</name>
</gene>
<proteinExistence type="inferred from homology"/>